<feature type="signal peptide">
    <location>
        <begin position="1"/>
        <end position="19"/>
    </location>
</feature>
<feature type="chain" id="PRO_0000018202" description="Putative DD-carboxypeptidase TP_0574">
    <location>
        <begin position="20"/>
        <end position="434"/>
    </location>
</feature>
<feature type="lipid moiety-binding region" description="N-palmitoyl cysteine" evidence="14 15">
    <location>
        <position position="20"/>
    </location>
</feature>
<feature type="lipid moiety-binding region" description="S-diacylglycerol cysteine" evidence="14">
    <location>
        <position position="20"/>
    </location>
</feature>
<feature type="mutagenesis site" description="Protein still binds ampicillin, in nonlipidated fragment (residues 21-43), crystallized." evidence="9">
    <original>HHETH</original>
    <variation>SHETS</variation>
    <location>
        <begin position="24"/>
        <end position="28"/>
    </location>
</feature>
<feature type="mutagenesis site" description="Protein still binds ampicillin and penicillin, in nonlipidated fragment (residues 21-43)." evidence="9">
    <original>S</original>
    <variation>C</variation>
    <variation>G</variation>
    <location>
        <position position="119"/>
    </location>
</feature>
<feature type="mutagenesis site" description="Protein still binds ampicillin, in nonlipidated fragment (residues 21-43)." evidence="9">
    <original>K</original>
    <variation>Q</variation>
    <location>
        <position position="306"/>
    </location>
</feature>
<feature type="mutagenesis site" description="Protein still binds ampicillin, in nonlipidated fragment (residues 21-43)." evidence="9">
    <original>C</original>
    <variation>A</variation>
    <location>
        <position position="315"/>
    </location>
</feature>
<feature type="sequence conflict" description="In Ref. 1; AAA75016/AAA75017." evidence="13" ref="1">
    <original>G</original>
    <variation>V</variation>
    <location>
        <position position="239"/>
    </location>
</feature>
<feature type="strand" evidence="18">
    <location>
        <begin position="27"/>
        <end position="35"/>
    </location>
</feature>
<feature type="helix" evidence="18">
    <location>
        <begin position="36"/>
        <end position="44"/>
    </location>
</feature>
<feature type="helix" evidence="18">
    <location>
        <begin position="49"/>
        <end position="51"/>
    </location>
</feature>
<feature type="strand" evidence="18">
    <location>
        <begin position="67"/>
        <end position="70"/>
    </location>
</feature>
<feature type="strand" evidence="18">
    <location>
        <begin position="72"/>
        <end position="75"/>
    </location>
</feature>
<feature type="helix" evidence="18">
    <location>
        <begin position="79"/>
        <end position="84"/>
    </location>
</feature>
<feature type="turn" evidence="18">
    <location>
        <begin position="85"/>
        <end position="87"/>
    </location>
</feature>
<feature type="strand" evidence="18">
    <location>
        <begin position="88"/>
        <end position="104"/>
    </location>
</feature>
<feature type="strand" evidence="18">
    <location>
        <begin position="110"/>
        <end position="126"/>
    </location>
</feature>
<feature type="strand" evidence="18">
    <location>
        <begin position="128"/>
        <end position="133"/>
    </location>
</feature>
<feature type="strand" evidence="18">
    <location>
        <begin position="139"/>
        <end position="143"/>
    </location>
</feature>
<feature type="strand" evidence="18">
    <location>
        <begin position="155"/>
        <end position="159"/>
    </location>
</feature>
<feature type="strand" evidence="18">
    <location>
        <begin position="162"/>
        <end position="182"/>
    </location>
</feature>
<feature type="helix" evidence="18">
    <location>
        <begin position="183"/>
        <end position="185"/>
    </location>
</feature>
<feature type="helix" evidence="18">
    <location>
        <begin position="186"/>
        <end position="193"/>
    </location>
</feature>
<feature type="strand" evidence="18">
    <location>
        <begin position="208"/>
        <end position="213"/>
    </location>
</feature>
<feature type="strand" evidence="18">
    <location>
        <begin position="231"/>
        <end position="239"/>
    </location>
</feature>
<feature type="strand" evidence="18">
    <location>
        <begin position="247"/>
        <end position="256"/>
    </location>
</feature>
<feature type="helix" evidence="18">
    <location>
        <begin position="264"/>
        <end position="271"/>
    </location>
</feature>
<feature type="strand" evidence="18">
    <location>
        <begin position="274"/>
        <end position="281"/>
    </location>
</feature>
<feature type="strand" evidence="18">
    <location>
        <begin position="293"/>
        <end position="295"/>
    </location>
</feature>
<feature type="turn" evidence="18">
    <location>
        <begin position="300"/>
        <end position="302"/>
    </location>
</feature>
<feature type="strand" evidence="18">
    <location>
        <begin position="307"/>
        <end position="310"/>
    </location>
</feature>
<feature type="strand" evidence="18">
    <location>
        <begin position="312"/>
        <end position="317"/>
    </location>
</feature>
<feature type="helix" evidence="18">
    <location>
        <begin position="322"/>
        <end position="324"/>
    </location>
</feature>
<feature type="strand" evidence="18">
    <location>
        <begin position="329"/>
        <end position="338"/>
    </location>
</feature>
<feature type="strand" evidence="18">
    <location>
        <begin position="344"/>
        <end position="350"/>
    </location>
</feature>
<feature type="strand" evidence="18">
    <location>
        <begin position="359"/>
        <end position="372"/>
    </location>
</feature>
<feature type="turn" evidence="18">
    <location>
        <begin position="374"/>
        <end position="379"/>
    </location>
</feature>
<feature type="strand" evidence="18">
    <location>
        <begin position="380"/>
        <end position="386"/>
    </location>
</feature>
<feature type="strand" evidence="18">
    <location>
        <begin position="392"/>
        <end position="398"/>
    </location>
</feature>
<feature type="strand" evidence="18">
    <location>
        <begin position="400"/>
        <end position="409"/>
    </location>
</feature>
<feature type="strand" evidence="18">
    <location>
        <begin position="414"/>
        <end position="420"/>
    </location>
</feature>
<feature type="strand" evidence="18">
    <location>
        <begin position="422"/>
        <end position="424"/>
    </location>
</feature>
<feature type="strand" evidence="18">
    <location>
        <begin position="427"/>
        <end position="432"/>
    </location>
</feature>
<protein>
    <recommendedName>
        <fullName evidence="11">Putative DD-carboxypeptidase TP_0574</fullName>
        <ecNumber evidence="8">3.4.-.-</ecNumber>
    </recommendedName>
    <alternativeName>
        <fullName evidence="10">47 kDa lipoprotein</fullName>
        <shortName evidence="9">Tp47</shortName>
        <shortName evidence="11">Tpp47</shortName>
    </alternativeName>
    <alternativeName>
        <fullName evidence="10">47 kDa membrane antigen</fullName>
    </alternativeName>
    <alternativeName>
        <fullName evidence="12">47-kilodalton major integral membrane immunogen</fullName>
    </alternativeName>
</protein>
<proteinExistence type="evidence at protein level"/>
<name>TA47_TREPA</name>
<sequence length="434" mass="47665">MKVKYALLSAGALQLLVVGCGSSHHETHYGYATLSYADYWAGELGQSRDVLLAGNAEADRAGDLDAGMFDAVSRATHGHGAFRQQFQYAVEVLGEKVLSKQETEDSRGRKKWEYETDPSVTKMVRASASFQDLGEDGEIKFEAVEGAVALADRASSFMVDSEEYKITNVKVHGMKFVPVAVPHELKGIAKEKFHFVEDSRVTENTNGLKTMLTEDSFSARKVSSMESPHDLVVDTVGTGYHSRFGSDAEASVMLKRADGSELSHREFIDYVMNFNTVRYDYYGDDASYTNLMASYGTKHSADSWWKTGRVPRISCGINYGFDRFKGSGPGYYRLTLIANGYRDVVADVRFLPKYEGNIDIGLKGKVLTIGGADAETLMDAAVDVFADGQPKLVSDQAVSLGQNVLSADFTPGTEYTVEVRFKEFGSVRAKVVAQ</sequence>
<organism>
    <name type="scientific">Treponema pallidum (strain Nichols)</name>
    <dbReference type="NCBI Taxonomy" id="243276"/>
    <lineage>
        <taxon>Bacteria</taxon>
        <taxon>Pseudomonadati</taxon>
        <taxon>Spirochaetota</taxon>
        <taxon>Spirochaetia</taxon>
        <taxon>Spirochaetales</taxon>
        <taxon>Treponemataceae</taxon>
        <taxon>Treponema</taxon>
    </lineage>
</organism>
<dbReference type="EC" id="3.4.-.-" evidence="8"/>
<dbReference type="EMBL" id="M88769">
    <property type="protein sequence ID" value="AAA75016.1"/>
    <property type="molecule type" value="Genomic_DNA"/>
</dbReference>
<dbReference type="EMBL" id="M88769">
    <property type="protein sequence ID" value="AAA75017.1"/>
    <property type="status" value="ALT_TERM"/>
    <property type="molecule type" value="Genomic_DNA"/>
</dbReference>
<dbReference type="EMBL" id="AE000520">
    <property type="protein sequence ID" value="AAC65545.1"/>
    <property type="molecule type" value="Genomic_DNA"/>
</dbReference>
<dbReference type="PIR" id="D71309">
    <property type="entry name" value="D71309"/>
</dbReference>
<dbReference type="RefSeq" id="WP_010882021.1">
    <property type="nucleotide sequence ID" value="NC_021490.2"/>
</dbReference>
<dbReference type="PDB" id="1O75">
    <property type="method" value="X-ray"/>
    <property type="resolution" value="1.95 A"/>
    <property type="chains" value="A/B=20-434"/>
</dbReference>
<dbReference type="PDBsum" id="1O75"/>
<dbReference type="SMR" id="P29723"/>
<dbReference type="STRING" id="243276.TP_0574"/>
<dbReference type="DrugBank" id="DB02879">
    <property type="generic name" value="2,3-Di-O-Sulfo-Alpha-D-Glucopyranose"/>
</dbReference>
<dbReference type="EnsemblBacteria" id="AAC65545">
    <property type="protein sequence ID" value="AAC65545"/>
    <property type="gene ID" value="TP_0574"/>
</dbReference>
<dbReference type="KEGG" id="tpa:TP_0574"/>
<dbReference type="KEGG" id="tpw:TPANIC_0574"/>
<dbReference type="HOGENOM" id="CLU_562301_0_0_12"/>
<dbReference type="SABIO-RK" id="P29723"/>
<dbReference type="EvolutionaryTrace" id="P29723"/>
<dbReference type="Proteomes" id="UP000000811">
    <property type="component" value="Chromosome"/>
</dbReference>
<dbReference type="GO" id="GO:0005886">
    <property type="term" value="C:plasma membrane"/>
    <property type="evidence" value="ECO:0007669"/>
    <property type="project" value="UniProtKB-SubCell"/>
</dbReference>
<dbReference type="GO" id="GO:0008233">
    <property type="term" value="F:peptidase activity"/>
    <property type="evidence" value="ECO:0007669"/>
    <property type="project" value="UniProtKB-KW"/>
</dbReference>
<dbReference type="GO" id="GO:0006508">
    <property type="term" value="P:proteolysis"/>
    <property type="evidence" value="ECO:0007669"/>
    <property type="project" value="UniProtKB-KW"/>
</dbReference>
<dbReference type="Gene3D" id="3.30.1490.200">
    <property type="entry name" value="Penicillin-binding protein Tp47, domain A"/>
    <property type="match status" value="1"/>
</dbReference>
<dbReference type="Gene3D" id="2.30.30.470">
    <property type="entry name" value="Penicillin-binding protein Tp47, domain B"/>
    <property type="match status" value="1"/>
</dbReference>
<dbReference type="Gene3D" id="2.60.40.1300">
    <property type="entry name" value="Penicillin-binding protein Tp47, domain C"/>
    <property type="match status" value="1"/>
</dbReference>
<dbReference type="Gene3D" id="2.60.40.1270">
    <property type="entry name" value="Penicillin-binding protein Tp47, domain D"/>
    <property type="match status" value="1"/>
</dbReference>
<dbReference type="InterPro" id="IPR029220">
    <property type="entry name" value="BP-Tp47_dom_D"/>
</dbReference>
<dbReference type="InterPro" id="IPR029221">
    <property type="entry name" value="PBP-Tp47_A"/>
</dbReference>
<dbReference type="InterPro" id="IPR029218">
    <property type="entry name" value="PBP-Tp47_dom_C"/>
</dbReference>
<dbReference type="InterPro" id="IPR038698">
    <property type="entry name" value="PBP_Tp47_domC_sf"/>
</dbReference>
<dbReference type="InterPro" id="IPR038031">
    <property type="entry name" value="Tp47_mid_C_dom"/>
</dbReference>
<dbReference type="InterPro" id="IPR036154">
    <property type="entry name" value="Tp47_N_sf"/>
</dbReference>
<dbReference type="Pfam" id="PF14889">
    <property type="entry name" value="PBP-Tp47_a"/>
    <property type="match status" value="1"/>
</dbReference>
<dbReference type="Pfam" id="PF14888">
    <property type="entry name" value="PBP-Tp47_c"/>
    <property type="match status" value="1"/>
</dbReference>
<dbReference type="SUPFAM" id="SSF81986">
    <property type="entry name" value="Tp47 lipoprotein, middle and C-terminal domains"/>
    <property type="match status" value="2"/>
</dbReference>
<dbReference type="SUPFAM" id="SSF82220">
    <property type="entry name" value="Tp47 lipoprotein, N-terminal domain"/>
    <property type="match status" value="1"/>
</dbReference>
<dbReference type="PROSITE" id="PS51257">
    <property type="entry name" value="PROKAR_LIPOPROTEIN"/>
    <property type="match status" value="1"/>
</dbReference>
<keyword id="KW-0002">3D-structure</keyword>
<keyword id="KW-0997">Cell inner membrane</keyword>
<keyword id="KW-1003">Cell membrane</keyword>
<keyword id="KW-0903">Direct protein sequencing</keyword>
<keyword id="KW-0378">Hydrolase</keyword>
<keyword id="KW-0449">Lipoprotein</keyword>
<keyword id="KW-0472">Membrane</keyword>
<keyword id="KW-0564">Palmitate</keyword>
<keyword id="KW-0645">Protease</keyword>
<keyword id="KW-1185">Reference proteome</keyword>
<keyword id="KW-0732">Signal</keyword>
<accession>P29723</accession>
<accession>O83584</accession>
<gene>
    <name type="ordered locus">TP_0574</name>
</gene>
<evidence type="ECO:0000269" key="1">
    <source>
    </source>
</evidence>
<evidence type="ECO:0000269" key="2">
    <source>
    </source>
</evidence>
<evidence type="ECO:0000269" key="3">
    <source>
    </source>
</evidence>
<evidence type="ECO:0000269" key="4">
    <source>
    </source>
</evidence>
<evidence type="ECO:0000269" key="5">
    <source>
    </source>
</evidence>
<evidence type="ECO:0000269" key="6">
    <source>
    </source>
</evidence>
<evidence type="ECO:0000269" key="7">
    <source>
    </source>
</evidence>
<evidence type="ECO:0000269" key="8">
    <source>
    </source>
</evidence>
<evidence type="ECO:0000303" key="9">
    <source>
    </source>
</evidence>
<evidence type="ECO:0000303" key="10">
    <source>
    </source>
</evidence>
<evidence type="ECO:0000303" key="11">
    <source>
    </source>
</evidence>
<evidence type="ECO:0000303" key="12">
    <source>
    </source>
</evidence>
<evidence type="ECO:0000305" key="13"/>
<evidence type="ECO:0000305" key="14">
    <source>
    </source>
</evidence>
<evidence type="ECO:0000305" key="15">
    <source>
    </source>
</evidence>
<evidence type="ECO:0000305" key="16">
    <source>
    </source>
</evidence>
<evidence type="ECO:0007744" key="17">
    <source>
        <dbReference type="PDB" id="1O75"/>
    </source>
</evidence>
<evidence type="ECO:0007829" key="18">
    <source>
        <dbReference type="PDB" id="1O75"/>
    </source>
</evidence>
<comment type="function">
    <text evidence="3 6 8 16">A possible D,D-carboxypeptidase, that releases amino acids sequentially from a proteins C-terminus (PubMed:12196546, PubMed:7972112). Has zinc-dependent carboxypeptidase activity on synthetic depsipeptide substrates (PubMed:7972112). May serve to decrease cross-linking of peptidoglycan, promoting the highly sinusous motility of this spirochaete (Probable). Overexpression of the whole protein in E.coli leads to aberrant cell morphology and extrusion of the cytoplasm, while overexpression of a construct with the first 62 resides of the protein fused to PhoA does have this effect, suggesting the whole protein, not the lipoprotein moiety, is toxic (PubMed:7972112). Binds penicillin (PubMed:2647634, PubMed:7972112). Penicillin binding is covalent, does not require lipidation, and is zinc-dependent (PubMed:12196546, PubMed:7972112). While this protein has beta-lactamase activity in vitro, that is probably not its role in vivo, as T.pallidum is very sensitive to penicillin antibiotics (PubMed:12196546).</text>
</comment>
<comment type="function">
    <text evidence="1 2 4 5">A pathogen-specific membrane antigen (PubMed:1372297, PubMed:2642466). Most abundant of the membrane lipoproteins, only found in pathogenic treponemes, suggesting that it is an important structural moiety in the cell envelope of virulent treponemal subspecies. A lipopeptide corresponding to the first 6 mature residues induces host (human and mouse) cytokine release by monocyte cell lines via TLR2 and CD14; nonlipidated protein does not stimulate host cells (PubMed:10426995). Stimulates host (human) dendritic cell maturation to become MHC class II-positive antigen presenting cells via TLR2, which depends on lipidation; nonlipidated protein does not stimulate maturation (PubMed:11160304).</text>
</comment>
<comment type="cofactor">
    <cofactor evidence="8">
        <name>Zn(2+)</name>
        <dbReference type="ChEBI" id="CHEBI:29105"/>
    </cofactor>
    <text evidence="3 8">Carboxypeptidase activity is stimulated by zinc (PubMed:7972112). Penicillin-binding is stimulated by zinc (PubMed:12196546).</text>
</comment>
<comment type="subunit">
    <text evidence="3">Probably a monomer; a non-lipidated construct (residues 22-434) is monomeric in solution but crystallizes as a homodimer.</text>
</comment>
<comment type="subcellular location">
    <subcellularLocation>
        <location evidence="16">Cell inner membrane</location>
        <topology evidence="14">Lipid-anchor</topology>
    </subcellularLocation>
</comment>
<comment type="PTM">
    <text evidence="4 5 6 7">The N-terminus is blocked (PubMed:2642466). Present as a doublet of low abundance 48 kDa and high abundance 47 kDa proteins (PubMed:1372297, PubMed:2647634, PubMed:2668192). The longer form is probably due to readthrough of the stop codon; the extra amino acids at the C-terminus would be X-Lys-Arg-Gly-Val-Leu-Ser-Arg-Val-Ser, a peptide antibody against this sequence detects only the 48 kDa form (PubMed:2668192).</text>
</comment>
<comment type="miscellaneous">
    <text evidence="1 4 8">A recombinant non-lipidated form (residues 20-434) is recognized by human antisera, indicating the lipidation site is not essential for antigenicity, although the acylated lipopeptide clearly is antigenic (PubMed:10426995, PubMed:1372297). The non-lipidated form also binds penicillin (PubMed:7972112).</text>
</comment>
<reference key="1">
    <citation type="journal article" date="1992" name="Infect. Immun.">
        <title>Analysis of the N-terminal region of the 47-kilodalton integral membrane lipoprotein of Treponema pallidum.</title>
        <authorList>
            <person name="Weigel L.M."/>
            <person name="Brandt M.E."/>
            <person name="Norgard M.V."/>
        </authorList>
    </citation>
    <scope>NUCLEOTIDE SEQUENCE [GENOMIC DNA]</scope>
    <scope>PROTEIN SEQUENCE OF 84-96; 126-143; 207-221; 266-298; 340-350; 366-390 AND 392-414</scope>
    <source>
        <strain>Nichols</strain>
    </source>
</reference>
<reference key="2">
    <citation type="journal article" date="1998" name="Science">
        <title>Complete genome sequence of Treponema pallidum, the syphilis spirochete.</title>
        <authorList>
            <person name="Fraser C.M."/>
            <person name="Norris S.J."/>
            <person name="Weinstock G.M."/>
            <person name="White O."/>
            <person name="Sutton G.G."/>
            <person name="Dodson R.J."/>
            <person name="Gwinn M.L."/>
            <person name="Hickey E.K."/>
            <person name="Clayton R.A."/>
            <person name="Ketchum K.A."/>
            <person name="Sodergren E."/>
            <person name="Hardham J.M."/>
            <person name="McLeod M.P."/>
            <person name="Salzberg S.L."/>
            <person name="Peterson J.D."/>
            <person name="Khalak H.G."/>
            <person name="Richardson D.L."/>
            <person name="Howell J.K."/>
            <person name="Chidambaram M."/>
            <person name="Utterback T.R."/>
            <person name="McDonald L.A."/>
            <person name="Artiach P."/>
            <person name="Bowman C."/>
            <person name="Cotton M.D."/>
            <person name="Fujii C."/>
            <person name="Garland S.A."/>
            <person name="Hatch B."/>
            <person name="Horst K."/>
            <person name="Roberts K.M."/>
            <person name="Sandusky M."/>
            <person name="Weidman J.F."/>
            <person name="Smith H.O."/>
            <person name="Venter J.C."/>
        </authorList>
    </citation>
    <scope>NUCLEOTIDE SEQUENCE [LARGE SCALE GENOMIC DNA]</scope>
    <source>
        <strain>Nichols</strain>
    </source>
</reference>
<reference key="3">
    <citation type="journal article" date="1989" name="Infect. Immun.">
        <title>Sequence analysis of the 47-kilodalton major integral membrane immunogen of Treponema pallidum.</title>
        <authorList>
            <person name="Hsu P.L."/>
            <person name="Chamberlain N.R."/>
            <person name="Orth K."/>
            <person name="Moomaw C.R."/>
            <person name="Zhang L.Q."/>
            <person name="Slaughter C.A."/>
            <person name="Radolf J.D."/>
            <person name="Sell S."/>
            <person name="Norgard M.V."/>
        </authorList>
    </citation>
    <scope>NUCLEOTIDE SEQUENCE [GENOMIC DNA] OF 68-434</scope>
    <scope>PROTEIN SEQUENCE OF 84-96; 126-143; 207-221; 266-298; 340-350 AND 392-414</scope>
    <source>
        <strain>Nichols</strain>
    </source>
</reference>
<reference key="4">
    <citation type="journal article" date="1989" name="Infect. Immun.">
        <title>Penicillin-binding proteins and peptidoglycan of Treponema pallidum subsp. pallidum.</title>
        <authorList>
            <person name="Radolf J.D."/>
            <person name="Moomaw C."/>
            <person name="Slaughter C.A."/>
            <person name="Norgard M.V."/>
        </authorList>
    </citation>
    <scope>PENICILLIN-BINDING</scope>
    <scope>SUBCELLULAR LOCATION</scope>
    <source>
        <strain>Nichols</strain>
    </source>
</reference>
<reference key="5">
    <citation type="journal article" date="1989" name="Infect. Immun.">
        <title>Acylation of the 47-kilodalton major membrane immunogen of Treponema pallidum determines its hydrophobicity.</title>
        <authorList>
            <person name="Chamberlain N.R."/>
            <person name="DeOgny L."/>
            <person name="Slaughter C."/>
            <person name="Radolf J.D."/>
            <person name="Norgard M.V."/>
        </authorList>
    </citation>
    <scope>PALMITOYLATION AT CYS-20</scope>
    <scope>PROBABLE READTHROUGH</scope>
    <source>
        <strain>Nichols</strain>
    </source>
</reference>
<reference key="6">
    <citation type="journal article" date="1994" name="Proc. Natl. Acad. Sci. U.S.A.">
        <title>The 47-kDa major lipoprotein immunogen of Treponema pallidum is a penicillin-binding protein with carboxypeptidase activity.</title>
        <authorList>
            <person name="Weigel L.M."/>
            <person name="Radolf J.D."/>
            <person name="Norgard M.V."/>
        </authorList>
    </citation>
    <scope>POSSIBLE FUNCTION AS A ZINC-DEPENDENT CARBOXYPEPTIDASE</scope>
    <scope>PENICILLIN-BINDING</scope>
    <source>
        <strain>Nichols</strain>
    </source>
</reference>
<reference key="7">
    <citation type="journal article" date="1999" name="Science">
        <title>Host defense mechanisms triggered by microbial lipoproteins through Toll-like receptors.</title>
        <authorList>
            <person name="Brightbill H.D."/>
            <person name="Libraty D.H."/>
            <person name="Krutzik S.R."/>
            <person name="Yang R.B."/>
            <person name="Belisle J.T."/>
            <person name="Bleharski J.R."/>
            <person name="Maitland M."/>
            <person name="Norgard M.V."/>
            <person name="Plevy S.E."/>
            <person name="Smale S.T."/>
            <person name="Brennan P.J."/>
            <person name="Bloom B.R."/>
            <person name="Godowski P.J."/>
            <person name="Modlin R.L."/>
        </authorList>
    </citation>
    <scope>FUNCTION IN INFECTION</scope>
    <scope>SUBCELLULAR LOCATION</scope>
    <scope>DIACYLGLYCEROL AT CYS-20</scope>
    <scope>PALMITOYLATION AT CYS-20</scope>
</reference>
<reference key="8">
    <citation type="journal article" date="2001" name="J. Immunol.">
        <title>Microbial lipopeptides stimulate dendritic cell maturation via Toll-like receptor 2.</title>
        <authorList>
            <person name="Hertz C.J."/>
            <person name="Kiertscher S.M."/>
            <person name="Godowski P.J."/>
            <person name="Bouis D.A."/>
            <person name="Norgard M.V."/>
            <person name="Roth M.D."/>
            <person name="Modlin R.L."/>
        </authorList>
    </citation>
    <scope>FUNCTION IN HOST DENDRITIC CELL MATURATION</scope>
</reference>
<reference evidence="17" key="9">
    <citation type="journal article" date="2002" name="J. Biol. Chem.">
        <title>Crystal structure of the 47-kDa lipoprotein of Treponema pallidum reveals a novel penicillin-binding protein.</title>
        <authorList>
            <person name="Deka R.K."/>
            <person name="Machius M."/>
            <person name="Norgard M.V."/>
            <person name="Tomchick D.R."/>
        </authorList>
    </citation>
    <scope>X-RAY CRYSTALLOGRAPHY (1.95 ANGSTROMS) OF 26-434</scope>
    <scope>FUNCTION</scope>
    <scope>SUBUNIT</scope>
    <scope>MUTAGENESIS OF 24-HIS--HIS-28; SER-119; LYS-306 AND CYS-315</scope>
    <scope>PENICILLIN-BINDING</scope>
</reference>